<keyword id="KW-0007">Acetylation</keyword>
<keyword id="KW-0175">Coiled coil</keyword>
<keyword id="KW-0963">Cytoplasm</keyword>
<keyword id="KW-0968">Cytoplasmic vesicle</keyword>
<keyword id="KW-0268">Exocytosis</keyword>
<keyword id="KW-0333">Golgi apparatus</keyword>
<keyword id="KW-0945">Host-virus interaction</keyword>
<keyword id="KW-0458">Lysosome</keyword>
<keyword id="KW-0472">Membrane</keyword>
<keyword id="KW-0597">Phosphoprotein</keyword>
<keyword id="KW-1267">Proteomics identification</keyword>
<keyword id="KW-1185">Reference proteome</keyword>
<keyword id="KW-0770">Synapse</keyword>
<feature type="initiator methionine" description="Removed" evidence="18 20 21">
    <location>
        <position position="1"/>
    </location>
</feature>
<feature type="chain" id="PRO_0000097556" description="SNARE-associated protein Snapin">
    <location>
        <begin position="2"/>
        <end position="136"/>
    </location>
</feature>
<feature type="region of interest" description="Interaction with TOR1A">
    <location>
        <begin position="83"/>
        <end position="136"/>
    </location>
</feature>
<feature type="coiled-coil region" evidence="3">
    <location>
        <begin position="37"/>
        <end position="126"/>
    </location>
</feature>
<feature type="modified residue" description="N-acetylalanine" evidence="18 20 21">
    <location>
        <position position="2"/>
    </location>
</feature>
<feature type="modified residue" description="Phosphoserine" evidence="20">
    <location>
        <position position="10"/>
    </location>
</feature>
<feature type="modified residue" description="Phosphothreonine" evidence="20 22">
    <location>
        <position position="14"/>
    </location>
</feature>
<feature type="modified residue" description="Phosphoserine; by PKA" evidence="2">
    <location>
        <position position="50"/>
    </location>
</feature>
<feature type="modified residue" description="Phosphoserine" evidence="22">
    <location>
        <position position="126"/>
    </location>
</feature>
<feature type="modified residue" description="Phosphotyrosine" evidence="19">
    <location>
        <position position="129"/>
    </location>
</feature>
<feature type="modified residue" description="Phosphoserine" evidence="17 19 20 22">
    <location>
        <position position="133"/>
    </location>
</feature>
<feature type="sequence variant" id="VAR_017423" description="In dbSNP:rs1802461.">
    <original>S</original>
    <variation>C</variation>
    <location>
        <position position="112"/>
    </location>
</feature>
<evidence type="ECO:0000250" key="1"/>
<evidence type="ECO:0000250" key="2">
    <source>
        <dbReference type="UniProtKB" id="Q9Z266"/>
    </source>
</evidence>
<evidence type="ECO:0000255" key="3"/>
<evidence type="ECO:0000269" key="4">
    <source>
    </source>
</evidence>
<evidence type="ECO:0000269" key="5">
    <source>
    </source>
</evidence>
<evidence type="ECO:0000269" key="6">
    <source>
    </source>
</evidence>
<evidence type="ECO:0000269" key="7">
    <source>
    </source>
</evidence>
<evidence type="ECO:0000269" key="8">
    <source>
    </source>
</evidence>
<evidence type="ECO:0000269" key="9">
    <source>
    </source>
</evidence>
<evidence type="ECO:0000269" key="10">
    <source>
    </source>
</evidence>
<evidence type="ECO:0000269" key="11">
    <source>
    </source>
</evidence>
<evidence type="ECO:0000269" key="12">
    <source>
    </source>
</evidence>
<evidence type="ECO:0000269" key="13">
    <source>
    </source>
</evidence>
<evidence type="ECO:0000305" key="14"/>
<evidence type="ECO:0000305" key="15">
    <source>
    </source>
</evidence>
<evidence type="ECO:0000305" key="16">
    <source>
    </source>
</evidence>
<evidence type="ECO:0007744" key="17">
    <source>
    </source>
</evidence>
<evidence type="ECO:0007744" key="18">
    <source>
    </source>
</evidence>
<evidence type="ECO:0007744" key="19">
    <source>
    </source>
</evidence>
<evidence type="ECO:0007744" key="20">
    <source>
    </source>
</evidence>
<evidence type="ECO:0007744" key="21">
    <source>
    </source>
</evidence>
<evidence type="ECO:0007744" key="22">
    <source>
    </source>
</evidence>
<protein>
    <recommendedName>
        <fullName>SNARE-associated protein Snapin</fullName>
    </recommendedName>
    <alternativeName>
        <fullName>Biogenesis of lysosome-related organelles complex 1 subunit 7</fullName>
        <shortName>BLOC-1 subunit 7</shortName>
    </alternativeName>
    <alternativeName>
        <fullName>Synaptosomal-associated protein 25-binding protein</fullName>
        <shortName>SNAP-associated protein</shortName>
    </alternativeName>
</protein>
<dbReference type="EMBL" id="AF086837">
    <property type="protein sequence ID" value="AAD11417.1"/>
    <property type="molecule type" value="mRNA"/>
</dbReference>
<dbReference type="EMBL" id="AK024555">
    <property type="protein sequence ID" value="BAB14927.1"/>
    <property type="molecule type" value="mRNA"/>
</dbReference>
<dbReference type="EMBL" id="BT006753">
    <property type="protein sequence ID" value="AAP35399.1"/>
    <property type="molecule type" value="mRNA"/>
</dbReference>
<dbReference type="EMBL" id="AL592150">
    <property type="protein sequence ID" value="CAI18797.1"/>
    <property type="molecule type" value="Genomic_DNA"/>
</dbReference>
<dbReference type="EMBL" id="CH471121">
    <property type="protein sequence ID" value="EAW53288.1"/>
    <property type="molecule type" value="Genomic_DNA"/>
</dbReference>
<dbReference type="EMBL" id="CH471121">
    <property type="protein sequence ID" value="EAW53289.1"/>
    <property type="molecule type" value="Genomic_DNA"/>
</dbReference>
<dbReference type="EMBL" id="BC000761">
    <property type="protein sequence ID" value="AAH00761.1"/>
    <property type="molecule type" value="mRNA"/>
</dbReference>
<dbReference type="EMBL" id="BC004494">
    <property type="protein sequence ID" value="AAH04494.1"/>
    <property type="molecule type" value="mRNA"/>
</dbReference>
<dbReference type="CCDS" id="CCDS1049.1"/>
<dbReference type="RefSeq" id="NP_036569.1">
    <property type="nucleotide sequence ID" value="NM_012437.6"/>
</dbReference>
<dbReference type="SMR" id="O95295"/>
<dbReference type="BioGRID" id="117101">
    <property type="interactions" value="159"/>
</dbReference>
<dbReference type="ComplexPortal" id="CPX-1910">
    <property type="entry name" value="BLOC-1 complex"/>
</dbReference>
<dbReference type="ComplexPortal" id="CPX-5029">
    <property type="entry name" value="BORC complex"/>
</dbReference>
<dbReference type="CORUM" id="O95295"/>
<dbReference type="FunCoup" id="O95295">
    <property type="interactions" value="804"/>
</dbReference>
<dbReference type="IntAct" id="O95295">
    <property type="interactions" value="142"/>
</dbReference>
<dbReference type="MINT" id="O95295"/>
<dbReference type="STRING" id="9606.ENSP00000357674"/>
<dbReference type="TCDB" id="1.F.1.1.1">
    <property type="family name" value="the synaptosomal vesicle fusion pore (svf-pore) family"/>
</dbReference>
<dbReference type="GlyGen" id="O95295">
    <property type="glycosylation" value="1 site, 1 O-linked glycan (1 site)"/>
</dbReference>
<dbReference type="iPTMnet" id="O95295"/>
<dbReference type="PhosphoSitePlus" id="O95295"/>
<dbReference type="BioMuta" id="SNAPIN"/>
<dbReference type="jPOST" id="O95295"/>
<dbReference type="MassIVE" id="O95295"/>
<dbReference type="PaxDb" id="9606-ENSP00000357674"/>
<dbReference type="PeptideAtlas" id="O95295"/>
<dbReference type="ProteomicsDB" id="50792"/>
<dbReference type="Pumba" id="O95295"/>
<dbReference type="ABCD" id="O95295">
    <property type="antibodies" value="1 sequenced antibody"/>
</dbReference>
<dbReference type="Antibodypedia" id="34134">
    <property type="antibodies" value="148 antibodies from 30 providers"/>
</dbReference>
<dbReference type="DNASU" id="23557"/>
<dbReference type="Ensembl" id="ENST00000368685.6">
    <property type="protein sequence ID" value="ENSP00000357674.5"/>
    <property type="gene ID" value="ENSG00000143553.11"/>
</dbReference>
<dbReference type="GeneID" id="23557"/>
<dbReference type="KEGG" id="hsa:23557"/>
<dbReference type="MANE-Select" id="ENST00000368685.6">
    <property type="protein sequence ID" value="ENSP00000357674.5"/>
    <property type="RefSeq nucleotide sequence ID" value="NM_012437.6"/>
    <property type="RefSeq protein sequence ID" value="NP_036569.1"/>
</dbReference>
<dbReference type="UCSC" id="uc001fcq.5">
    <property type="organism name" value="human"/>
</dbReference>
<dbReference type="AGR" id="HGNC:17145"/>
<dbReference type="CTD" id="23557"/>
<dbReference type="DisGeNET" id="23557"/>
<dbReference type="GeneCards" id="SNAPIN"/>
<dbReference type="HGNC" id="HGNC:17145">
    <property type="gene designation" value="SNAPIN"/>
</dbReference>
<dbReference type="HPA" id="ENSG00000143553">
    <property type="expression patterns" value="Low tissue specificity"/>
</dbReference>
<dbReference type="MIM" id="607007">
    <property type="type" value="gene"/>
</dbReference>
<dbReference type="neXtProt" id="NX_O95295"/>
<dbReference type="OpenTargets" id="ENSG00000143553"/>
<dbReference type="PharmGKB" id="PA162404012"/>
<dbReference type="VEuPathDB" id="HostDB:ENSG00000143553"/>
<dbReference type="eggNOG" id="ENOG502S07W">
    <property type="taxonomic scope" value="Eukaryota"/>
</dbReference>
<dbReference type="GeneTree" id="ENSGT00390000008274"/>
<dbReference type="HOGENOM" id="CLU_124640_1_0_1"/>
<dbReference type="InParanoid" id="O95295"/>
<dbReference type="OMA" id="LNMHIRE"/>
<dbReference type="OrthoDB" id="5399166at2759"/>
<dbReference type="PAN-GO" id="O95295">
    <property type="GO annotations" value="9 GO annotations based on evolutionary models"/>
</dbReference>
<dbReference type="PhylomeDB" id="O95295"/>
<dbReference type="TreeFam" id="TF319577"/>
<dbReference type="PathwayCommons" id="O95295"/>
<dbReference type="Reactome" id="R-HSA-432722">
    <property type="pathway name" value="Golgi Associated Vesicle Biogenesis"/>
</dbReference>
<dbReference type="SignaLink" id="O95295"/>
<dbReference type="SIGNOR" id="O95295"/>
<dbReference type="BioGRID-ORCS" id="23557">
    <property type="hits" value="110 hits in 1156 CRISPR screens"/>
</dbReference>
<dbReference type="ChiTaRS" id="SNAPIN">
    <property type="organism name" value="human"/>
</dbReference>
<dbReference type="GeneWiki" id="SNAPAP"/>
<dbReference type="GenomeRNAi" id="23557"/>
<dbReference type="Pharos" id="O95295">
    <property type="development level" value="Tbio"/>
</dbReference>
<dbReference type="PRO" id="PR:O95295"/>
<dbReference type="Proteomes" id="UP000005640">
    <property type="component" value="Chromosome 1"/>
</dbReference>
<dbReference type="RNAct" id="O95295">
    <property type="molecule type" value="protein"/>
</dbReference>
<dbReference type="Bgee" id="ENSG00000143553">
    <property type="expression patterns" value="Expressed in oocyte and 183 other cell types or tissues"/>
</dbReference>
<dbReference type="GO" id="GO:0001669">
    <property type="term" value="C:acrosomal vesicle"/>
    <property type="evidence" value="ECO:0007669"/>
    <property type="project" value="Ensembl"/>
</dbReference>
<dbReference type="GO" id="GO:1904115">
    <property type="term" value="C:axon cytoplasm"/>
    <property type="evidence" value="ECO:0007669"/>
    <property type="project" value="GOC"/>
</dbReference>
<dbReference type="GO" id="GO:0031083">
    <property type="term" value="C:BLOC-1 complex"/>
    <property type="evidence" value="ECO:0000314"/>
    <property type="project" value="UniProtKB"/>
</dbReference>
<dbReference type="GO" id="GO:0099078">
    <property type="term" value="C:BORC complex"/>
    <property type="evidence" value="ECO:0000314"/>
    <property type="project" value="UniProtKB"/>
</dbReference>
<dbReference type="GO" id="GO:0098574">
    <property type="term" value="C:cytoplasmic side of lysosomal membrane"/>
    <property type="evidence" value="ECO:0000303"/>
    <property type="project" value="ComplexPortal"/>
</dbReference>
<dbReference type="GO" id="GO:0005829">
    <property type="term" value="C:cytosol"/>
    <property type="evidence" value="ECO:0007669"/>
    <property type="project" value="UniProtKB-SubCell"/>
</dbReference>
<dbReference type="GO" id="GO:0000139">
    <property type="term" value="C:Golgi membrane"/>
    <property type="evidence" value="ECO:0007669"/>
    <property type="project" value="UniProtKB-SubCell"/>
</dbReference>
<dbReference type="GO" id="GO:0002177">
    <property type="term" value="C:manchette"/>
    <property type="evidence" value="ECO:0007669"/>
    <property type="project" value="Ensembl"/>
</dbReference>
<dbReference type="GO" id="GO:1990742">
    <property type="term" value="C:microvesicle"/>
    <property type="evidence" value="ECO:0007669"/>
    <property type="project" value="Ensembl"/>
</dbReference>
<dbReference type="GO" id="GO:0048471">
    <property type="term" value="C:perinuclear region of cytoplasm"/>
    <property type="evidence" value="ECO:0000314"/>
    <property type="project" value="UniProtKB"/>
</dbReference>
<dbReference type="GO" id="GO:0030141">
    <property type="term" value="C:secretory granule"/>
    <property type="evidence" value="ECO:0000250"/>
    <property type="project" value="UniProtKB"/>
</dbReference>
<dbReference type="GO" id="GO:0045202">
    <property type="term" value="C:synapse"/>
    <property type="evidence" value="ECO:0000314"/>
    <property type="project" value="MGI"/>
</dbReference>
<dbReference type="GO" id="GO:0008021">
    <property type="term" value="C:synaptic vesicle"/>
    <property type="evidence" value="ECO:0000314"/>
    <property type="project" value="UniProtKB"/>
</dbReference>
<dbReference type="GO" id="GO:0030672">
    <property type="term" value="C:synaptic vesicle membrane"/>
    <property type="evidence" value="ECO:0007669"/>
    <property type="project" value="UniProtKB-SubCell"/>
</dbReference>
<dbReference type="GO" id="GO:0000149">
    <property type="term" value="F:SNARE binding"/>
    <property type="evidence" value="ECO:0000314"/>
    <property type="project" value="MGI"/>
</dbReference>
<dbReference type="GO" id="GO:0008089">
    <property type="term" value="P:anterograde axonal transport"/>
    <property type="evidence" value="ECO:0000250"/>
    <property type="project" value="UniProtKB"/>
</dbReference>
<dbReference type="GO" id="GO:0048490">
    <property type="term" value="P:anterograde synaptic vesicle transport"/>
    <property type="evidence" value="ECO:0000250"/>
    <property type="project" value="UniProtKB"/>
</dbReference>
<dbReference type="GO" id="GO:0097352">
    <property type="term" value="P:autophagosome maturation"/>
    <property type="evidence" value="ECO:0007669"/>
    <property type="project" value="Ensembl"/>
</dbReference>
<dbReference type="GO" id="GO:0008333">
    <property type="term" value="P:endosome to lysosome transport"/>
    <property type="evidence" value="ECO:0000316"/>
    <property type="project" value="MGI"/>
</dbReference>
<dbReference type="GO" id="GO:0006886">
    <property type="term" value="P:intracellular protein transport"/>
    <property type="evidence" value="ECO:0000304"/>
    <property type="project" value="ProtInc"/>
</dbReference>
<dbReference type="GO" id="GO:1902774">
    <property type="term" value="P:late endosome to lysosome transport"/>
    <property type="evidence" value="ECO:0007669"/>
    <property type="project" value="Ensembl"/>
</dbReference>
<dbReference type="GO" id="GO:0007042">
    <property type="term" value="P:lysosomal lumen acidification"/>
    <property type="evidence" value="ECO:0007669"/>
    <property type="project" value="Ensembl"/>
</dbReference>
<dbReference type="GO" id="GO:0032418">
    <property type="term" value="P:lysosome localization"/>
    <property type="evidence" value="ECO:0000315"/>
    <property type="project" value="UniProtKB"/>
</dbReference>
<dbReference type="GO" id="GO:0007040">
    <property type="term" value="P:lysosome organization"/>
    <property type="evidence" value="ECO:0000318"/>
    <property type="project" value="GO_Central"/>
</dbReference>
<dbReference type="GO" id="GO:0032438">
    <property type="term" value="P:melanosome organization"/>
    <property type="evidence" value="ECO:0000303"/>
    <property type="project" value="UniProtKB"/>
</dbReference>
<dbReference type="GO" id="GO:0010977">
    <property type="term" value="P:negative regulation of neuron projection development"/>
    <property type="evidence" value="ECO:0007669"/>
    <property type="project" value="Ensembl"/>
</dbReference>
<dbReference type="GO" id="GO:0070050">
    <property type="term" value="P:neuron cellular homeostasis"/>
    <property type="evidence" value="ECO:0007669"/>
    <property type="project" value="Ensembl"/>
</dbReference>
<dbReference type="GO" id="GO:0031175">
    <property type="term" value="P:neuron projection development"/>
    <property type="evidence" value="ECO:0000250"/>
    <property type="project" value="UniProtKB"/>
</dbReference>
<dbReference type="GO" id="GO:0007269">
    <property type="term" value="P:neurotransmitter secretion"/>
    <property type="evidence" value="ECO:0000304"/>
    <property type="project" value="ProtInc"/>
</dbReference>
<dbReference type="GO" id="GO:0072384">
    <property type="term" value="P:organelle transport along microtubule"/>
    <property type="evidence" value="ECO:0000303"/>
    <property type="project" value="ComplexPortal"/>
</dbReference>
<dbReference type="GO" id="GO:1902824">
    <property type="term" value="P:positive regulation of late endosome to lysosome transport"/>
    <property type="evidence" value="ECO:0000304"/>
    <property type="project" value="ParkinsonsUK-UCL"/>
</dbReference>
<dbReference type="GO" id="GO:0051604">
    <property type="term" value="P:protein maturation"/>
    <property type="evidence" value="ECO:0007669"/>
    <property type="project" value="Ensembl"/>
</dbReference>
<dbReference type="GO" id="GO:0031503">
    <property type="term" value="P:protein-containing complex localization"/>
    <property type="evidence" value="ECO:0007669"/>
    <property type="project" value="Ensembl"/>
</dbReference>
<dbReference type="GO" id="GO:0051036">
    <property type="term" value="P:regulation of endosome size"/>
    <property type="evidence" value="ECO:0000303"/>
    <property type="project" value="ComplexPortal"/>
</dbReference>
<dbReference type="GO" id="GO:0062196">
    <property type="term" value="P:regulation of lysosome size"/>
    <property type="evidence" value="ECO:0000303"/>
    <property type="project" value="ComplexPortal"/>
</dbReference>
<dbReference type="GO" id="GO:2000300">
    <property type="term" value="P:regulation of synaptic vesicle exocytosis"/>
    <property type="evidence" value="ECO:0007669"/>
    <property type="project" value="Ensembl"/>
</dbReference>
<dbReference type="GO" id="GO:0008090">
    <property type="term" value="P:retrograde axonal transport"/>
    <property type="evidence" value="ECO:0007669"/>
    <property type="project" value="Ensembl"/>
</dbReference>
<dbReference type="GO" id="GO:0016079">
    <property type="term" value="P:synaptic vesicle exocytosis"/>
    <property type="evidence" value="ECO:0000314"/>
    <property type="project" value="MGI"/>
</dbReference>
<dbReference type="GO" id="GO:0031629">
    <property type="term" value="P:synaptic vesicle fusion to presynaptic active zone membrane"/>
    <property type="evidence" value="ECO:0007669"/>
    <property type="project" value="Ensembl"/>
</dbReference>
<dbReference type="GO" id="GO:0016188">
    <property type="term" value="P:synaptic vesicle maturation"/>
    <property type="evidence" value="ECO:0007669"/>
    <property type="project" value="Ensembl"/>
</dbReference>
<dbReference type="GO" id="GO:0048489">
    <property type="term" value="P:synaptic vesicle transport"/>
    <property type="evidence" value="ECO:0000315"/>
    <property type="project" value="UniProtKB"/>
</dbReference>
<dbReference type="GO" id="GO:0072553">
    <property type="term" value="P:terminal button organization"/>
    <property type="evidence" value="ECO:0007669"/>
    <property type="project" value="Ensembl"/>
</dbReference>
<dbReference type="InterPro" id="IPR017246">
    <property type="entry name" value="Snapin"/>
</dbReference>
<dbReference type="InterPro" id="IPR028119">
    <property type="entry name" value="Snapin/Pallidin/Snn1"/>
</dbReference>
<dbReference type="PANTHER" id="PTHR31305">
    <property type="entry name" value="SNARE-ASSOCIATED PROTEIN SNAPIN"/>
    <property type="match status" value="1"/>
</dbReference>
<dbReference type="PANTHER" id="PTHR31305:SF2">
    <property type="entry name" value="SNARE-ASSOCIATED PROTEIN SNAPIN"/>
    <property type="match status" value="1"/>
</dbReference>
<dbReference type="Pfam" id="PF14712">
    <property type="entry name" value="Snapin_Pallidin"/>
    <property type="match status" value="1"/>
</dbReference>
<dbReference type="PIRSF" id="PIRSF037631">
    <property type="entry name" value="Snapin"/>
    <property type="match status" value="1"/>
</dbReference>
<reference key="1">
    <citation type="journal article" date="1999" name="Nat. Neurosci.">
        <title>Snapin: a SNARE-associated protein implicated in synaptic transmission.</title>
        <authorList>
            <person name="Ilardi J.M."/>
            <person name="Mochida S."/>
            <person name="Sheng Z.-H."/>
        </authorList>
    </citation>
    <scope>NUCLEOTIDE SEQUENCE [MRNA]</scope>
    <source>
        <tissue>Brain</tissue>
    </source>
</reference>
<reference key="2">
    <citation type="journal article" date="2004" name="Nat. Genet.">
        <title>Complete sequencing and characterization of 21,243 full-length human cDNAs.</title>
        <authorList>
            <person name="Ota T."/>
            <person name="Suzuki Y."/>
            <person name="Nishikawa T."/>
            <person name="Otsuki T."/>
            <person name="Sugiyama T."/>
            <person name="Irie R."/>
            <person name="Wakamatsu A."/>
            <person name="Hayashi K."/>
            <person name="Sato H."/>
            <person name="Nagai K."/>
            <person name="Kimura K."/>
            <person name="Makita H."/>
            <person name="Sekine M."/>
            <person name="Obayashi M."/>
            <person name="Nishi T."/>
            <person name="Shibahara T."/>
            <person name="Tanaka T."/>
            <person name="Ishii S."/>
            <person name="Yamamoto J."/>
            <person name="Saito K."/>
            <person name="Kawai Y."/>
            <person name="Isono Y."/>
            <person name="Nakamura Y."/>
            <person name="Nagahari K."/>
            <person name="Murakami K."/>
            <person name="Yasuda T."/>
            <person name="Iwayanagi T."/>
            <person name="Wagatsuma M."/>
            <person name="Shiratori A."/>
            <person name="Sudo H."/>
            <person name="Hosoiri T."/>
            <person name="Kaku Y."/>
            <person name="Kodaira H."/>
            <person name="Kondo H."/>
            <person name="Sugawara M."/>
            <person name="Takahashi M."/>
            <person name="Kanda K."/>
            <person name="Yokoi T."/>
            <person name="Furuya T."/>
            <person name="Kikkawa E."/>
            <person name="Omura Y."/>
            <person name="Abe K."/>
            <person name="Kamihara K."/>
            <person name="Katsuta N."/>
            <person name="Sato K."/>
            <person name="Tanikawa M."/>
            <person name="Yamazaki M."/>
            <person name="Ninomiya K."/>
            <person name="Ishibashi T."/>
            <person name="Yamashita H."/>
            <person name="Murakawa K."/>
            <person name="Fujimori K."/>
            <person name="Tanai H."/>
            <person name="Kimata M."/>
            <person name="Watanabe M."/>
            <person name="Hiraoka S."/>
            <person name="Chiba Y."/>
            <person name="Ishida S."/>
            <person name="Ono Y."/>
            <person name="Takiguchi S."/>
            <person name="Watanabe S."/>
            <person name="Yosida M."/>
            <person name="Hotuta T."/>
            <person name="Kusano J."/>
            <person name="Kanehori K."/>
            <person name="Takahashi-Fujii A."/>
            <person name="Hara H."/>
            <person name="Tanase T.-O."/>
            <person name="Nomura Y."/>
            <person name="Togiya S."/>
            <person name="Komai F."/>
            <person name="Hara R."/>
            <person name="Takeuchi K."/>
            <person name="Arita M."/>
            <person name="Imose N."/>
            <person name="Musashino K."/>
            <person name="Yuuki H."/>
            <person name="Oshima A."/>
            <person name="Sasaki N."/>
            <person name="Aotsuka S."/>
            <person name="Yoshikawa Y."/>
            <person name="Matsunawa H."/>
            <person name="Ichihara T."/>
            <person name="Shiohata N."/>
            <person name="Sano S."/>
            <person name="Moriya S."/>
            <person name="Momiyama H."/>
            <person name="Satoh N."/>
            <person name="Takami S."/>
            <person name="Terashima Y."/>
            <person name="Suzuki O."/>
            <person name="Nakagawa S."/>
            <person name="Senoh A."/>
            <person name="Mizoguchi H."/>
            <person name="Goto Y."/>
            <person name="Shimizu F."/>
            <person name="Wakebe H."/>
            <person name="Hishigaki H."/>
            <person name="Watanabe T."/>
            <person name="Sugiyama A."/>
            <person name="Takemoto M."/>
            <person name="Kawakami B."/>
            <person name="Yamazaki M."/>
            <person name="Watanabe K."/>
            <person name="Kumagai A."/>
            <person name="Itakura S."/>
            <person name="Fukuzumi Y."/>
            <person name="Fujimori Y."/>
            <person name="Komiyama M."/>
            <person name="Tashiro H."/>
            <person name="Tanigami A."/>
            <person name="Fujiwara T."/>
            <person name="Ono T."/>
            <person name="Yamada K."/>
            <person name="Fujii Y."/>
            <person name="Ozaki K."/>
            <person name="Hirao M."/>
            <person name="Ohmori Y."/>
            <person name="Kawabata A."/>
            <person name="Hikiji T."/>
            <person name="Kobatake N."/>
            <person name="Inagaki H."/>
            <person name="Ikema Y."/>
            <person name="Okamoto S."/>
            <person name="Okitani R."/>
            <person name="Kawakami T."/>
            <person name="Noguchi S."/>
            <person name="Itoh T."/>
            <person name="Shigeta K."/>
            <person name="Senba T."/>
            <person name="Matsumura K."/>
            <person name="Nakajima Y."/>
            <person name="Mizuno T."/>
            <person name="Morinaga M."/>
            <person name="Sasaki M."/>
            <person name="Togashi T."/>
            <person name="Oyama M."/>
            <person name="Hata H."/>
            <person name="Watanabe M."/>
            <person name="Komatsu T."/>
            <person name="Mizushima-Sugano J."/>
            <person name="Satoh T."/>
            <person name="Shirai Y."/>
            <person name="Takahashi Y."/>
            <person name="Nakagawa K."/>
            <person name="Okumura K."/>
            <person name="Nagase T."/>
            <person name="Nomura N."/>
            <person name="Kikuchi H."/>
            <person name="Masuho Y."/>
            <person name="Yamashita R."/>
            <person name="Nakai K."/>
            <person name="Yada T."/>
            <person name="Nakamura Y."/>
            <person name="Ohara O."/>
            <person name="Isogai T."/>
            <person name="Sugano S."/>
        </authorList>
    </citation>
    <scope>NUCLEOTIDE SEQUENCE [LARGE SCALE MRNA]</scope>
    <source>
        <tissue>Adipose tissue</tissue>
    </source>
</reference>
<reference key="3">
    <citation type="submission" date="2003-05" db="EMBL/GenBank/DDBJ databases">
        <title>Cloning of human full-length CDSs in BD Creator(TM) system donor vector.</title>
        <authorList>
            <person name="Kalnine N."/>
            <person name="Chen X."/>
            <person name="Rolfs A."/>
            <person name="Halleck A."/>
            <person name="Hines L."/>
            <person name="Eisenstein S."/>
            <person name="Koundinya M."/>
            <person name="Raphael J."/>
            <person name="Moreira D."/>
            <person name="Kelley T."/>
            <person name="LaBaer J."/>
            <person name="Lin Y."/>
            <person name="Phelan M."/>
            <person name="Farmer A."/>
        </authorList>
    </citation>
    <scope>NUCLEOTIDE SEQUENCE [LARGE SCALE MRNA]</scope>
</reference>
<reference key="4">
    <citation type="journal article" date="2006" name="Nature">
        <title>The DNA sequence and biological annotation of human chromosome 1.</title>
        <authorList>
            <person name="Gregory S.G."/>
            <person name="Barlow K.F."/>
            <person name="McLay K.E."/>
            <person name="Kaul R."/>
            <person name="Swarbreck D."/>
            <person name="Dunham A."/>
            <person name="Scott C.E."/>
            <person name="Howe K.L."/>
            <person name="Woodfine K."/>
            <person name="Spencer C.C.A."/>
            <person name="Jones M.C."/>
            <person name="Gillson C."/>
            <person name="Searle S."/>
            <person name="Zhou Y."/>
            <person name="Kokocinski F."/>
            <person name="McDonald L."/>
            <person name="Evans R."/>
            <person name="Phillips K."/>
            <person name="Atkinson A."/>
            <person name="Cooper R."/>
            <person name="Jones C."/>
            <person name="Hall R.E."/>
            <person name="Andrews T.D."/>
            <person name="Lloyd C."/>
            <person name="Ainscough R."/>
            <person name="Almeida J.P."/>
            <person name="Ambrose K.D."/>
            <person name="Anderson F."/>
            <person name="Andrew R.W."/>
            <person name="Ashwell R.I.S."/>
            <person name="Aubin K."/>
            <person name="Babbage A.K."/>
            <person name="Bagguley C.L."/>
            <person name="Bailey J."/>
            <person name="Beasley H."/>
            <person name="Bethel G."/>
            <person name="Bird C.P."/>
            <person name="Bray-Allen S."/>
            <person name="Brown J.Y."/>
            <person name="Brown A.J."/>
            <person name="Buckley D."/>
            <person name="Burton J."/>
            <person name="Bye J."/>
            <person name="Carder C."/>
            <person name="Chapman J.C."/>
            <person name="Clark S.Y."/>
            <person name="Clarke G."/>
            <person name="Clee C."/>
            <person name="Cobley V."/>
            <person name="Collier R.E."/>
            <person name="Corby N."/>
            <person name="Coville G.J."/>
            <person name="Davies J."/>
            <person name="Deadman R."/>
            <person name="Dunn M."/>
            <person name="Earthrowl M."/>
            <person name="Ellington A.G."/>
            <person name="Errington H."/>
            <person name="Frankish A."/>
            <person name="Frankland J."/>
            <person name="French L."/>
            <person name="Garner P."/>
            <person name="Garnett J."/>
            <person name="Gay L."/>
            <person name="Ghori M.R.J."/>
            <person name="Gibson R."/>
            <person name="Gilby L.M."/>
            <person name="Gillett W."/>
            <person name="Glithero R.J."/>
            <person name="Grafham D.V."/>
            <person name="Griffiths C."/>
            <person name="Griffiths-Jones S."/>
            <person name="Grocock R."/>
            <person name="Hammond S."/>
            <person name="Harrison E.S.I."/>
            <person name="Hart E."/>
            <person name="Haugen E."/>
            <person name="Heath P.D."/>
            <person name="Holmes S."/>
            <person name="Holt K."/>
            <person name="Howden P.J."/>
            <person name="Hunt A.R."/>
            <person name="Hunt S.E."/>
            <person name="Hunter G."/>
            <person name="Isherwood J."/>
            <person name="James R."/>
            <person name="Johnson C."/>
            <person name="Johnson D."/>
            <person name="Joy A."/>
            <person name="Kay M."/>
            <person name="Kershaw J.K."/>
            <person name="Kibukawa M."/>
            <person name="Kimberley A.M."/>
            <person name="King A."/>
            <person name="Knights A.J."/>
            <person name="Lad H."/>
            <person name="Laird G."/>
            <person name="Lawlor S."/>
            <person name="Leongamornlert D.A."/>
            <person name="Lloyd D.M."/>
            <person name="Loveland J."/>
            <person name="Lovell J."/>
            <person name="Lush M.J."/>
            <person name="Lyne R."/>
            <person name="Martin S."/>
            <person name="Mashreghi-Mohammadi M."/>
            <person name="Matthews L."/>
            <person name="Matthews N.S.W."/>
            <person name="McLaren S."/>
            <person name="Milne S."/>
            <person name="Mistry S."/>
            <person name="Moore M.J.F."/>
            <person name="Nickerson T."/>
            <person name="O'Dell C.N."/>
            <person name="Oliver K."/>
            <person name="Palmeiri A."/>
            <person name="Palmer S.A."/>
            <person name="Parker A."/>
            <person name="Patel D."/>
            <person name="Pearce A.V."/>
            <person name="Peck A.I."/>
            <person name="Pelan S."/>
            <person name="Phelps K."/>
            <person name="Phillimore B.J."/>
            <person name="Plumb R."/>
            <person name="Rajan J."/>
            <person name="Raymond C."/>
            <person name="Rouse G."/>
            <person name="Saenphimmachak C."/>
            <person name="Sehra H.K."/>
            <person name="Sheridan E."/>
            <person name="Shownkeen R."/>
            <person name="Sims S."/>
            <person name="Skuce C.D."/>
            <person name="Smith M."/>
            <person name="Steward C."/>
            <person name="Subramanian S."/>
            <person name="Sycamore N."/>
            <person name="Tracey A."/>
            <person name="Tromans A."/>
            <person name="Van Helmond Z."/>
            <person name="Wall M."/>
            <person name="Wallis J.M."/>
            <person name="White S."/>
            <person name="Whitehead S.L."/>
            <person name="Wilkinson J.E."/>
            <person name="Willey D.L."/>
            <person name="Williams H."/>
            <person name="Wilming L."/>
            <person name="Wray P.W."/>
            <person name="Wu Z."/>
            <person name="Coulson A."/>
            <person name="Vaudin M."/>
            <person name="Sulston J.E."/>
            <person name="Durbin R.M."/>
            <person name="Hubbard T."/>
            <person name="Wooster R."/>
            <person name="Dunham I."/>
            <person name="Carter N.P."/>
            <person name="McVean G."/>
            <person name="Ross M.T."/>
            <person name="Harrow J."/>
            <person name="Olson M.V."/>
            <person name="Beck S."/>
            <person name="Rogers J."/>
            <person name="Bentley D.R."/>
        </authorList>
    </citation>
    <scope>NUCLEOTIDE SEQUENCE [LARGE SCALE GENOMIC DNA]</scope>
</reference>
<reference key="5">
    <citation type="submission" date="2005-09" db="EMBL/GenBank/DDBJ databases">
        <authorList>
            <person name="Mural R.J."/>
            <person name="Istrail S."/>
            <person name="Sutton G.G."/>
            <person name="Florea L."/>
            <person name="Halpern A.L."/>
            <person name="Mobarry C.M."/>
            <person name="Lippert R."/>
            <person name="Walenz B."/>
            <person name="Shatkay H."/>
            <person name="Dew I."/>
            <person name="Miller J.R."/>
            <person name="Flanigan M.J."/>
            <person name="Edwards N.J."/>
            <person name="Bolanos R."/>
            <person name="Fasulo D."/>
            <person name="Halldorsson B.V."/>
            <person name="Hannenhalli S."/>
            <person name="Turner R."/>
            <person name="Yooseph S."/>
            <person name="Lu F."/>
            <person name="Nusskern D.R."/>
            <person name="Shue B.C."/>
            <person name="Zheng X.H."/>
            <person name="Zhong F."/>
            <person name="Delcher A.L."/>
            <person name="Huson D.H."/>
            <person name="Kravitz S.A."/>
            <person name="Mouchard L."/>
            <person name="Reinert K."/>
            <person name="Remington K.A."/>
            <person name="Clark A.G."/>
            <person name="Waterman M.S."/>
            <person name="Eichler E.E."/>
            <person name="Adams M.D."/>
            <person name="Hunkapiller M.W."/>
            <person name="Myers E.W."/>
            <person name="Venter J.C."/>
        </authorList>
    </citation>
    <scope>NUCLEOTIDE SEQUENCE [LARGE SCALE GENOMIC DNA]</scope>
</reference>
<reference key="6">
    <citation type="journal article" date="2004" name="Genome Res.">
        <title>The status, quality, and expansion of the NIH full-length cDNA project: the Mammalian Gene Collection (MGC).</title>
        <authorList>
            <consortium name="The MGC Project Team"/>
        </authorList>
    </citation>
    <scope>NUCLEOTIDE SEQUENCE [LARGE SCALE MRNA]</scope>
    <source>
        <tissue>Lung carcinoma</tissue>
        <tissue>Melanoma</tissue>
    </source>
</reference>
<reference key="7">
    <citation type="journal article" date="2003" name="Biochem. Biophys. Res. Commun.">
        <title>Snapin interacts with the N-terminus of regulator of G protein signaling 7.</title>
        <authorList>
            <person name="Hunt R.A."/>
            <person name="Edris W."/>
            <person name="Chanda P.K."/>
            <person name="Nieuwenhuijsen B."/>
            <person name="Young K.H."/>
        </authorList>
    </citation>
    <scope>INTERACTION WITH RGS7</scope>
</reference>
<reference key="8">
    <citation type="journal article" date="2004" name="J. Biol. Chem.">
        <title>Identification of snapin and three novel proteins (BLOS1, BLOS2, and BLOS3/reduced pigmentation) as subunits of biogenesis of lysosome-related organelles complex-1 (BLOC-1).</title>
        <authorList>
            <person name="Starcevic M."/>
            <person name="Dell'Angelica E.C."/>
        </authorList>
    </citation>
    <scope>IDENTIFICATION IN THE BLOC-1 COMPLEX</scope>
</reference>
<reference key="9">
    <citation type="journal article" date="2005" name="Cell">
        <title>Centriolin anchoring of exocyst and SNARE complexes at the midbody is required for secretory-vesicle-mediated abscission.</title>
        <authorList>
            <person name="Gromley A."/>
            <person name="Yeaman C."/>
            <person name="Rosa J."/>
            <person name="Redick S."/>
            <person name="Chen C.-T."/>
            <person name="Mirabelle S."/>
            <person name="Guha M."/>
            <person name="Sillibourne J."/>
            <person name="Doxsey S.J."/>
        </authorList>
    </citation>
    <scope>INTERACTION WITH CNTRL</scope>
</reference>
<reference key="10">
    <citation type="journal article" date="2007" name="Mol. Biol. Cell">
        <title>BLOC-1 is required for cargo-specific sorting from vacuolar early endosomes toward lysosome-related organelles.</title>
        <authorList>
            <person name="Setty S.R."/>
            <person name="Tenza D."/>
            <person name="Truschel S.T."/>
            <person name="Chou E."/>
            <person name="Sviderskaya E.V."/>
            <person name="Theos A.C."/>
            <person name="Lamoreux M.L."/>
            <person name="Di Pietro S.M."/>
            <person name="Starcevic M."/>
            <person name="Bennett D.C."/>
            <person name="Dell'Angelica E.C."/>
            <person name="Raposo G."/>
            <person name="Marks M.S."/>
        </authorList>
    </citation>
    <scope>FUNCTION</scope>
</reference>
<reference key="11">
    <citation type="journal article" date="2008" name="J. Biol. Chem.">
        <title>The dystonia-associated protein torsinA modulates synaptic vesicle recycling.</title>
        <authorList>
            <person name="Granata A."/>
            <person name="Watson R."/>
            <person name="Collinson L.M."/>
            <person name="Schiavo G."/>
            <person name="Warner T.T."/>
        </authorList>
    </citation>
    <scope>FUNCTION IN VESICLE RECYCLING</scope>
    <scope>INTERACTION WITH TOR1A</scope>
    <scope>SUBCELLULAR LOCATION</scope>
    <scope>PHOSPHORYLATION</scope>
</reference>
<reference key="12">
    <citation type="journal article" date="2008" name="Proc. Natl. Acad. Sci. U.S.A.">
        <title>A quantitative atlas of mitotic phosphorylation.</title>
        <authorList>
            <person name="Dephoure N."/>
            <person name="Zhou C."/>
            <person name="Villen J."/>
            <person name="Beausoleil S.A."/>
            <person name="Bakalarski C.E."/>
            <person name="Elledge S.J."/>
            <person name="Gygi S.P."/>
        </authorList>
    </citation>
    <scope>PHOSPHORYLATION [LARGE SCALE ANALYSIS] AT SER-133</scope>
    <scope>IDENTIFICATION BY MASS SPECTROMETRY [LARGE SCALE ANALYSIS]</scope>
    <source>
        <tissue>Cervix carcinoma</tissue>
    </source>
</reference>
<reference key="13">
    <citation type="journal article" date="2009" name="Anal. Chem.">
        <title>Lys-N and trypsin cover complementary parts of the phosphoproteome in a refined SCX-based approach.</title>
        <authorList>
            <person name="Gauci S."/>
            <person name="Helbig A.O."/>
            <person name="Slijper M."/>
            <person name="Krijgsveld J."/>
            <person name="Heck A.J."/>
            <person name="Mohammed S."/>
        </authorList>
    </citation>
    <scope>ACETYLATION [LARGE SCALE ANALYSIS] AT ALA-2</scope>
    <scope>CLEAVAGE OF INITIATOR METHIONINE [LARGE SCALE ANALYSIS]</scope>
    <scope>IDENTIFICATION BY MASS SPECTROMETRY [LARGE SCALE ANALYSIS]</scope>
</reference>
<reference key="14">
    <citation type="journal article" date="2009" name="Mol. Hum. Reprod.">
        <title>The SNARE-associated component SNAPIN binds PUMILIO2 and NANOS1 proteins in human male germ cells.</title>
        <authorList>
            <person name="Ginter-Matuszewska B."/>
            <person name="Spik A."/>
            <person name="Rembiszewska A."/>
            <person name="Koyias C."/>
            <person name="Kupryjanczyk J."/>
            <person name="Jaruzelska J."/>
        </authorList>
    </citation>
    <scope>SUBCELLULAR LOCATION</scope>
    <scope>INTERACTION WITH PUM2 AND NANOS1</scope>
    <scope>TISSUE SPECIFICITY</scope>
    <scope>DEVELOPMENTAL STAGE</scope>
</reference>
<reference key="15">
    <citation type="journal article" date="2009" name="Sci. Signal.">
        <title>Quantitative phosphoproteomic analysis of T cell receptor signaling reveals system-wide modulation of protein-protein interactions.</title>
        <authorList>
            <person name="Mayya V."/>
            <person name="Lundgren D.H."/>
            <person name="Hwang S.-I."/>
            <person name="Rezaul K."/>
            <person name="Wu L."/>
            <person name="Eng J.K."/>
            <person name="Rodionov V."/>
            <person name="Han D.K."/>
        </authorList>
    </citation>
    <scope>PHOSPHORYLATION [LARGE SCALE ANALYSIS] AT TYR-129 AND SER-133</scope>
    <scope>IDENTIFICATION BY MASS SPECTROMETRY [LARGE SCALE ANALYSIS]</scope>
    <source>
        <tissue>Leukemic T-cell</tissue>
    </source>
</reference>
<reference key="16">
    <citation type="journal article" date="2010" name="Sci. Signal.">
        <title>Quantitative phosphoproteomics reveals widespread full phosphorylation site occupancy during mitosis.</title>
        <authorList>
            <person name="Olsen J.V."/>
            <person name="Vermeulen M."/>
            <person name="Santamaria A."/>
            <person name="Kumar C."/>
            <person name="Miller M.L."/>
            <person name="Jensen L.J."/>
            <person name="Gnad F."/>
            <person name="Cox J."/>
            <person name="Jensen T.S."/>
            <person name="Nigg E.A."/>
            <person name="Brunak S."/>
            <person name="Mann M."/>
        </authorList>
    </citation>
    <scope>ACETYLATION [LARGE SCALE ANALYSIS] AT ALA-2</scope>
    <scope>PHOSPHORYLATION [LARGE SCALE ANALYSIS] AT SER-10; THR-14 AND SER-133</scope>
    <scope>CLEAVAGE OF INITIATOR METHIONINE [LARGE SCALE ANALYSIS]</scope>
    <scope>IDENTIFICATION BY MASS SPECTROMETRY [LARGE SCALE ANALYSIS]</scope>
    <source>
        <tissue>Cervix carcinoma</tissue>
    </source>
</reference>
<reference key="17">
    <citation type="journal article" date="2011" name="BMC Syst. Biol.">
        <title>Initial characterization of the human central proteome.</title>
        <authorList>
            <person name="Burkard T.R."/>
            <person name="Planyavsky M."/>
            <person name="Kaupe I."/>
            <person name="Breitwieser F.P."/>
            <person name="Buerckstuemmer T."/>
            <person name="Bennett K.L."/>
            <person name="Superti-Furga G."/>
            <person name="Colinge J."/>
        </authorList>
    </citation>
    <scope>IDENTIFICATION BY MASS SPECTROMETRY [LARGE SCALE ANALYSIS]</scope>
</reference>
<reference key="18">
    <citation type="journal article" date="2011" name="EMBO J.">
        <title>CSN complex controls the stability of selected synaptic proteins via a torsinA-dependent process.</title>
        <authorList>
            <person name="Granata A."/>
            <person name="Koo S.J."/>
            <person name="Haucke V."/>
            <person name="Schiavo G."/>
            <person name="Warner T.T."/>
        </authorList>
    </citation>
    <scope>INTERACTION WITH TOR1A</scope>
    <scope>SUBCELLULAR LOCATION</scope>
    <scope>PHOSPHORYLATION</scope>
</reference>
<reference key="19">
    <citation type="journal article" date="2011" name="J. Virol.">
        <title>Human cytomegalovirus primase UL70 specifically interacts with cellular factor Snapin.</title>
        <authorList>
            <person name="Shen A."/>
            <person name="Lei J."/>
            <person name="Yang E."/>
            <person name="Pei Y."/>
            <person name="Chen Y.C."/>
            <person name="Gong H."/>
            <person name="Xiao G."/>
            <person name="Liu F."/>
        </authorList>
    </citation>
    <scope>INTERACTION WITH HHV-5 PROTEIN UL70 (MICROBIAL INFECTION)</scope>
</reference>
<reference key="20">
    <citation type="journal article" date="2012" name="J. Biol. Chem.">
        <title>Assembly and architecture of biogenesis of lysosome-related organelles complex-1 (BLOC-1).</title>
        <authorList>
            <person name="Lee H.H."/>
            <person name="Nemecek D."/>
            <person name="Schindler C."/>
            <person name="Smith W.J."/>
            <person name="Ghirlando R."/>
            <person name="Steven A.C."/>
            <person name="Bonifacino J.S."/>
            <person name="Hurley J.H."/>
        </authorList>
    </citation>
    <scope>IDENTIFICATION IN THE BLOC-1 COMPLEX</scope>
    <scope>COMPOSITION OF THE BLOC-1 COMPLEX</scope>
</reference>
<reference key="21">
    <citation type="journal article" date="2012" name="Proc. Natl. Acad. Sci. U.S.A.">
        <title>N-terminal acetylome analyses and functional insights of the N-terminal acetyltransferase NatB.</title>
        <authorList>
            <person name="Van Damme P."/>
            <person name="Lasa M."/>
            <person name="Polevoda B."/>
            <person name="Gazquez C."/>
            <person name="Elosegui-Artola A."/>
            <person name="Kim D.S."/>
            <person name="De Juan-Pardo E."/>
            <person name="Demeyer K."/>
            <person name="Hole K."/>
            <person name="Larrea E."/>
            <person name="Timmerman E."/>
            <person name="Prieto J."/>
            <person name="Arnesen T."/>
            <person name="Sherman F."/>
            <person name="Gevaert K."/>
            <person name="Aldabe R."/>
        </authorList>
    </citation>
    <scope>ACETYLATION [LARGE SCALE ANALYSIS] AT ALA-2</scope>
    <scope>CLEAVAGE OF INITIATOR METHIONINE [LARGE SCALE ANALYSIS]</scope>
    <scope>IDENTIFICATION BY MASS SPECTROMETRY [LARGE SCALE ANALYSIS]</scope>
</reference>
<reference key="22">
    <citation type="journal article" date="2013" name="J. Proteome Res.">
        <title>Toward a comprehensive characterization of a human cancer cell phosphoproteome.</title>
        <authorList>
            <person name="Zhou H."/>
            <person name="Di Palma S."/>
            <person name="Preisinger C."/>
            <person name="Peng M."/>
            <person name="Polat A.N."/>
            <person name="Heck A.J."/>
            <person name="Mohammed S."/>
        </authorList>
    </citation>
    <scope>PHOSPHORYLATION [LARGE SCALE ANALYSIS] AT THR-14; SER-126 AND SER-133</scope>
    <scope>IDENTIFICATION BY MASS SPECTROMETRY [LARGE SCALE ANALYSIS]</scope>
    <source>
        <tissue>Cervix carcinoma</tissue>
        <tissue>Erythroleukemia</tissue>
    </source>
</reference>
<reference key="23">
    <citation type="journal article" date="2015" name="Dev. Cell">
        <title>BORC, a multisubunit complex that regulates lysosome positioning.</title>
        <authorList>
            <person name="Pu J."/>
            <person name="Schindler C."/>
            <person name="Jia R."/>
            <person name="Jarnik M."/>
            <person name="Backlund P."/>
            <person name="Bonifacino J.S."/>
        </authorList>
    </citation>
    <scope>FUNCTION</scope>
    <scope>IDENTIFICATION OF THE BORC COMPLEX</scope>
    <scope>SUBCELLULAR LOCATION</scope>
</reference>
<accession>O95295</accession>
<accession>D3DV56</accession>
<accession>Q5SXU8</accession>
<comment type="function">
    <text evidence="7 8 13">Component of the BLOC-1 complex, a complex that is required for normal biogenesis of lysosome-related organelles (LRO), such as platelet dense granules and melanosomes. In concert with the AP-3 complex, the BLOC-1 complex is required to target membrane protein cargos into vesicles assembled at cell bodies for delivery into neurites and nerve terminals. The BLOC-1 complex, in association with SNARE proteins, is also proposed to be involved in neurite extension. Plays a role in intracellular vesicle trafficking and synaptic vesicle recycling. May modulate a step between vesicle priming, fusion and calcium-dependent neurotransmitter release through its ability to potentiate the interaction of synaptotagmin with the SNAREs and the plasma-membrane-associated protein SNAP25. Its phosphorylation state influences exocytotic protein interactions and may regulate synaptic vesicle exocytosis. May also have a role in the mechanisms of SNARE-mediated membrane fusion in non-neuronal cells (PubMed:17182842, PubMed:18167355). As part of the BORC complex may play a role in lysosomes movement and localization at the cell periphery. Associated with the cytosolic face of lysosomes, the BORC complex may recruit ARL8B and couple lysosomes to microtubule plus-end-directed kinesin motor (PubMed:25898167).</text>
</comment>
<comment type="subunit">
    <text evidence="4 5 6 8 9 10 12 13">Component of the biogenesis of lysosome-related organelles complex 1 (BLOC-1) composed of BLOC1S1, BLOC1S2, BLOC1S3, BLOC1S4, BLOC1S5, BLOC1S6, DTNBP1/BLOC1S7 and SNAPIN/BLOC1S8. Octamer composed of one copy each BLOC1S1, BLOC1S2, BLOC1S3, BLOC1S4, BLOC1S5, BLOC1S6, DTNBP1/BLOC1S7 and SNAPIN/BLOC1S8. The BLOC-1 complex associates with the AP-3 protein complex and membrane protein cargos (PubMed:15102850, PubMed:22203680). Component of the BLOC-one-related complex (BORC) which is composed of BLOC1S1, BLOC1S2, BORCS5, BORCS6, BORCS7, BORCS8, KXD1 and SNAPIN (PubMed:25898167). Associates with the SNARE complex. Interacts with CSNK1D, SNAP23 and STX4A but not with STX1A, VAMP2 and SYT1. Interacts with SNAP25; the interaction with SNAP25 is increased by its phosphorylation. Interacts with CNTRL, NANOS1, PUM2 and RGS7 (PubMed:12659861, PubMed:16213214, PubMed:19168546). Interacts with TOR1A; the interaction is direct and associates SNAPIN with the CSN complex (PubMed:18167355, PubMed:21102408).</text>
</comment>
<comment type="subunit">
    <text evidence="11">(Microbial infection) Interacts with human cytomegalovirus/HHV-5 protein UL70.</text>
</comment>
<comment type="interaction">
    <interactant intactId="EBI-296723">
        <id>O95295</id>
    </interactant>
    <interactant intactId="EBI-11096309">
        <id>Q9NYB9-2</id>
        <label>ABI2</label>
    </interactant>
    <organismsDiffer>false</organismsDiffer>
    <experiments>5</experiments>
</comment>
<comment type="interaction">
    <interactant intactId="EBI-296723">
        <id>O95295</id>
    </interactant>
    <interactant intactId="EBI-11524452">
        <id>Q8N9N5-2</id>
        <label>BANP</label>
    </interactant>
    <organismsDiffer>false</organismsDiffer>
    <experiments>3</experiments>
</comment>
<comment type="interaction">
    <interactant intactId="EBI-296723">
        <id>O95295</id>
    </interactant>
    <interactant intactId="EBI-12123320">
        <id>Q12934-2</id>
        <label>BFSP1</label>
    </interactant>
    <organismsDiffer>false</organismsDiffer>
    <experiments>3</experiments>
</comment>
<comment type="interaction">
    <interactant intactId="EBI-296723">
        <id>O95295</id>
    </interactant>
    <interactant intactId="EBI-10229433">
        <id>Q13515</id>
        <label>BFSP2</label>
    </interactant>
    <organismsDiffer>false</organismsDiffer>
    <experiments>3</experiments>
</comment>
<comment type="interaction">
    <interactant intactId="EBI-296723">
        <id>O95295</id>
    </interactant>
    <interactant intactId="EBI-348630">
        <id>P78537</id>
        <label>BLOC1S1</label>
    </interactant>
    <organismsDiffer>false</organismsDiffer>
    <experiments>8</experiments>
</comment>
<comment type="interaction">
    <interactant intactId="EBI-296723">
        <id>O95295</id>
    </interactant>
    <interactant intactId="EBI-465872">
        <id>Q6QNY1</id>
        <label>BLOC1S2</label>
    </interactant>
    <organismsDiffer>false</organismsDiffer>
    <experiments>10</experiments>
</comment>
<comment type="interaction">
    <interactant intactId="EBI-296723">
        <id>O95295</id>
    </interactant>
    <interactant intactId="EBI-18396958">
        <id>A1L168</id>
        <label>C20orf202</label>
    </interactant>
    <organismsDiffer>false</organismsDiffer>
    <experiments>3</experiments>
</comment>
<comment type="interaction">
    <interactant intactId="EBI-296723">
        <id>O95295</id>
    </interactant>
    <interactant intactId="EBI-10171570">
        <id>Q68D86</id>
        <label>CCDC102B</label>
    </interactant>
    <organismsDiffer>false</organismsDiffer>
    <experiments>3</experiments>
</comment>
<comment type="interaction">
    <interactant intactId="EBI-296723">
        <id>O95295</id>
    </interactant>
    <interactant intactId="EBI-741406">
        <id>P51946</id>
        <label>CCNH</label>
    </interactant>
    <organismsDiffer>false</organismsDiffer>
    <experiments>3</experiments>
</comment>
<comment type="interaction">
    <interactant intactId="EBI-296723">
        <id>O95295</id>
    </interactant>
    <interactant intactId="EBI-2871584">
        <id>Q8IV53</id>
        <label>DENND1C</label>
    </interactant>
    <organismsDiffer>false</organismsDiffer>
    <experiments>3</experiments>
</comment>
<comment type="interaction">
    <interactant intactId="EBI-296723">
        <id>O95295</id>
    </interactant>
    <interactant intactId="EBI-465804">
        <id>Q96EV8</id>
        <label>DTNBP1</label>
    </interactant>
    <organismsDiffer>false</organismsDiffer>
    <experiments>9</experiments>
</comment>
<comment type="interaction">
    <interactant intactId="EBI-296723">
        <id>O95295</id>
    </interactant>
    <interactant intactId="EBI-20842218">
        <id>Q8IYW4</id>
        <label>ENTHD1</label>
    </interactant>
    <organismsDiffer>false</organismsDiffer>
    <experiments>4</experiments>
</comment>
<comment type="interaction">
    <interactant intactId="EBI-296723">
        <id>O95295</id>
    </interactant>
    <interactant intactId="EBI-1045313">
        <id>Q9NV70</id>
        <label>EXOC1</label>
    </interactant>
    <organismsDiffer>false</organismsDiffer>
    <experiments>3</experiments>
</comment>
<comment type="interaction">
    <interactant intactId="EBI-296723">
        <id>O95295</id>
    </interactant>
    <interactant intactId="EBI-6251402">
        <id>Q9UPT5-1</id>
        <label>EXOC7</label>
    </interactant>
    <organismsDiffer>false</organismsDiffer>
    <experiments>3</experiments>
</comment>
<comment type="interaction">
    <interactant intactId="EBI-296723">
        <id>O95295</id>
    </interactant>
    <interactant intactId="EBI-5661036">
        <id>A1L4K1</id>
        <label>FSD2</label>
    </interactant>
    <organismsDiffer>false</organismsDiffer>
    <experiments>3</experiments>
</comment>
<comment type="interaction">
    <interactant intactId="EBI-296723">
        <id>O95295</id>
    </interactant>
    <interactant intactId="EBI-12190633">
        <id>Q70UQ0-4</id>
        <label>IKBIP</label>
    </interactant>
    <organismsDiffer>false</organismsDiffer>
    <experiments>4</experiments>
</comment>
<comment type="interaction">
    <interactant intactId="EBI-296723">
        <id>O95295</id>
    </interactant>
    <interactant intactId="EBI-4311436">
        <id>Q2T9L4</id>
        <label>INSYN1</label>
    </interactant>
    <organismsDiffer>false</organismsDiffer>
    <experiments>4</experiments>
</comment>
<comment type="interaction">
    <interactant intactId="EBI-296723">
        <id>O95295</id>
    </interactant>
    <interactant intactId="EBI-2556193">
        <id>Q63ZY3</id>
        <label>KANK2</label>
    </interactant>
    <organismsDiffer>false</organismsDiffer>
    <experiments>3</experiments>
</comment>
<comment type="interaction">
    <interactant intactId="EBI-296723">
        <id>O95295</id>
    </interactant>
    <interactant intactId="EBI-739566">
        <id>P19012</id>
        <label>KRT15</label>
    </interactant>
    <organismsDiffer>false</organismsDiffer>
    <experiments>3</experiments>
</comment>
<comment type="interaction">
    <interactant intactId="EBI-296723">
        <id>O95295</id>
    </interactant>
    <interactant intactId="EBI-356410">
        <id>P08779</id>
        <label>KRT16</label>
    </interactant>
    <organismsDiffer>false</organismsDiffer>
    <experiments>3</experiments>
</comment>
<comment type="interaction">
    <interactant intactId="EBI-296723">
        <id>O95295</id>
    </interactant>
    <interactant intactId="EBI-742756">
        <id>P08727</id>
        <label>KRT19</label>
    </interactant>
    <organismsDiffer>false</organismsDiffer>
    <experiments>3</experiments>
</comment>
<comment type="interaction">
    <interactant intactId="EBI-296723">
        <id>O95295</id>
    </interactant>
    <interactant intactId="EBI-742094">
        <id>P35900</id>
        <label>KRT20</label>
    </interactant>
    <organismsDiffer>false</organismsDiffer>
    <experiments>3</experiments>
</comment>
<comment type="interaction">
    <interactant intactId="EBI-296723">
        <id>O95295</id>
    </interactant>
    <interactant intactId="EBI-2952736">
        <id>Q2M2I5</id>
        <label>KRT24</label>
    </interactant>
    <organismsDiffer>false</organismsDiffer>
    <experiments>6</experiments>
</comment>
<comment type="interaction">
    <interactant intactId="EBI-296723">
        <id>O95295</id>
    </interactant>
    <interactant intactId="EBI-12084444">
        <id>Q7Z3Y9</id>
        <label>KRT26</label>
    </interactant>
    <organismsDiffer>false</organismsDiffer>
    <experiments>3</experiments>
</comment>
<comment type="interaction">
    <interactant intactId="EBI-296723">
        <id>O95295</id>
    </interactant>
    <interactant intactId="EBI-3044087">
        <id>Q7Z3Y8</id>
        <label>KRT27</label>
    </interactant>
    <organismsDiffer>false</organismsDiffer>
    <experiments>4</experiments>
</comment>
<comment type="interaction">
    <interactant intactId="EBI-296723">
        <id>O95295</id>
    </interactant>
    <interactant intactId="EBI-968218">
        <id>P20700</id>
        <label>LMNB1</label>
    </interactant>
    <organismsDiffer>false</organismsDiffer>
    <experiments>3</experiments>
</comment>
<comment type="interaction">
    <interactant intactId="EBI-296723">
        <id>O95295</id>
    </interactant>
    <interactant intactId="EBI-5323863">
        <id>Q5S007</id>
        <label>LRRK2</label>
    </interactant>
    <organismsDiffer>false</organismsDiffer>
    <experiments>5</experiments>
</comment>
<comment type="interaction">
    <interactant intactId="EBI-296723">
        <id>O95295</id>
    </interactant>
    <interactant intactId="EBI-10172876">
        <id>Q7Z6G3-2</id>
        <label>NECAB2</label>
    </interactant>
    <organismsDiffer>false</organismsDiffer>
    <experiments>3</experiments>
</comment>
<comment type="interaction">
    <interactant intactId="EBI-296723">
        <id>O95295</id>
    </interactant>
    <interactant intactId="EBI-744782">
        <id>Q9Y5B8</id>
        <label>NME7</label>
    </interactant>
    <organismsDiffer>false</organismsDiffer>
    <experiments>3</experiments>
</comment>
<comment type="interaction">
    <interactant intactId="EBI-296723">
        <id>O95295</id>
    </interactant>
    <interactant intactId="EBI-751933">
        <id>Q9H1M0</id>
        <label>NUP62CL</label>
    </interactant>
    <organismsDiffer>false</organismsDiffer>
    <experiments>3</experiments>
</comment>
<comment type="interaction">
    <interactant intactId="EBI-296723">
        <id>O95295</id>
    </interactant>
    <interactant intactId="EBI-2563309">
        <id>P49585</id>
        <label>PCYT1A</label>
    </interactant>
    <organismsDiffer>false</organismsDiffer>
    <experiments>3</experiments>
</comment>
<comment type="interaction">
    <interactant intactId="EBI-296723">
        <id>O95295</id>
    </interactant>
    <interactant intactId="EBI-3923605">
        <id>Q5JTB6</id>
        <label>PLAC9</label>
    </interactant>
    <organismsDiffer>false</organismsDiffer>
    <experiments>3</experiments>
</comment>
<comment type="interaction">
    <interactant intactId="EBI-296723">
        <id>O95295</id>
    </interactant>
    <interactant intactId="EBI-14093916">
        <id>Q9UJ41-4</id>
        <label>RABGEF1</label>
    </interactant>
    <organismsDiffer>false</organismsDiffer>
    <experiments>3</experiments>
</comment>
<comment type="interaction">
    <interactant intactId="EBI-296723">
        <id>O95295</id>
    </interactant>
    <interactant intactId="EBI-741854">
        <id>Q96BD8</id>
        <label>SKA1</label>
    </interactant>
    <organismsDiffer>false</organismsDiffer>
    <experiments>5</experiments>
</comment>
<comment type="interaction">
    <interactant intactId="EBI-296723">
        <id>O95295</id>
    </interactant>
    <interactant intactId="EBI-1633392">
        <id>Q15849-1</id>
        <label>SLC14A2</label>
    </interactant>
    <organismsDiffer>false</organismsDiffer>
    <experiments>5</experiments>
</comment>
<comment type="interaction">
    <interactant intactId="EBI-296723">
        <id>O95295</id>
    </interactant>
    <interactant intactId="EBI-514908">
        <id>P11277</id>
        <label>SPTB</label>
    </interactant>
    <organismsDiffer>false</organismsDiffer>
    <experiments>3</experiments>
</comment>
<comment type="interaction">
    <interactant intactId="EBI-296723">
        <id>O95295</id>
    </interactant>
    <interactant intactId="EBI-1105213">
        <id>Q9UBB9</id>
        <label>TFIP11</label>
    </interactant>
    <organismsDiffer>false</organismsDiffer>
    <experiments>3</experiments>
</comment>
<comment type="interaction">
    <interactant intactId="EBI-296723">
        <id>O95295</id>
    </interactant>
    <interactant intactId="EBI-10977815">
        <id>P07951-2</id>
        <label>TPM2</label>
    </interactant>
    <organismsDiffer>false</organismsDiffer>
    <experiments>3</experiments>
</comment>
<comment type="interaction">
    <interactant intactId="EBI-296723">
        <id>O95295</id>
    </interactant>
    <interactant intactId="EBI-355607">
        <id>P06753</id>
        <label>TPM3</label>
    </interactant>
    <organismsDiffer>false</organismsDiffer>
    <experiments>3</experiments>
</comment>
<comment type="interaction">
    <interactant intactId="EBI-296723">
        <id>O95295</id>
    </interactant>
    <interactant intactId="EBI-1642100">
        <id>P67936</id>
        <label>TPM4</label>
    </interactant>
    <organismsDiffer>false</organismsDiffer>
    <experiments>3</experiments>
</comment>
<comment type="interaction">
    <interactant intactId="EBI-296723">
        <id>O95295</id>
    </interactant>
    <interactant intactId="EBI-346882">
        <id>Q99816</id>
        <label>TSG101</label>
    </interactant>
    <organismsDiffer>false</organismsDiffer>
    <experiments>3</experiments>
</comment>
<comment type="interaction">
    <interactant intactId="EBI-296723">
        <id>O95295</id>
    </interactant>
    <interactant intactId="EBI-712969">
        <id>Q9Y3C0</id>
        <label>WASHC3</label>
    </interactant>
    <organismsDiffer>false</organismsDiffer>
    <experiments>3</experiments>
</comment>
<comment type="interaction">
    <interactant intactId="EBI-296723">
        <id>O95295</id>
    </interactant>
    <interactant intactId="EBI-1635608">
        <id>Q62668-1</id>
        <label>Slc14a2</label>
    </interactant>
    <organismsDiffer>true</organismsDiffer>
    <experiments>6</experiments>
</comment>
<comment type="subcellular location">
    <subcellularLocation>
        <location evidence="2">Membrane</location>
        <topology evidence="2">Peripheral membrane protein</topology>
        <orientation evidence="2">Cytoplasmic side</orientation>
    </subcellularLocation>
    <subcellularLocation>
        <location evidence="2">Cytoplasm</location>
        <location evidence="2">Cytosol</location>
    </subcellularLocation>
    <subcellularLocation>
        <location evidence="8 9 10">Cytoplasm</location>
        <location evidence="8 9 10">Perinuclear region</location>
    </subcellularLocation>
    <subcellularLocation>
        <location evidence="2">Golgi apparatus membrane</location>
    </subcellularLocation>
    <subcellularLocation>
        <location evidence="16">Lysosome membrane</location>
    </subcellularLocation>
    <subcellularLocation>
        <location evidence="15">Cytoplasmic vesicle</location>
        <location evidence="15">Secretory vesicle</location>
        <location evidence="15">Synaptic vesicle membrane</location>
    </subcellularLocation>
    <text evidence="9">Colocalizes with NANOS1 and PUM2 in the perinuclear region of germ cells.</text>
</comment>
<comment type="tissue specificity">
    <text evidence="9">Expressed in male germ cells of adult testis (at protein level).</text>
</comment>
<comment type="developmental stage">
    <text evidence="9">Expressed in germ cells of 22-week prenatal testis.</text>
</comment>
<comment type="PTM">
    <text evidence="1 8 10">Phosphorylated by CSNK1D/CK1 (By similarity). Phosphorylated by PKD, phosphorylation controls SNAPIN protein stability.</text>
</comment>
<comment type="similarity">
    <text evidence="14">Belongs to the SNAPIN family.</text>
</comment>
<organism>
    <name type="scientific">Homo sapiens</name>
    <name type="common">Human</name>
    <dbReference type="NCBI Taxonomy" id="9606"/>
    <lineage>
        <taxon>Eukaryota</taxon>
        <taxon>Metazoa</taxon>
        <taxon>Chordata</taxon>
        <taxon>Craniata</taxon>
        <taxon>Vertebrata</taxon>
        <taxon>Euteleostomi</taxon>
        <taxon>Mammalia</taxon>
        <taxon>Eutheria</taxon>
        <taxon>Euarchontoglires</taxon>
        <taxon>Primates</taxon>
        <taxon>Haplorrhini</taxon>
        <taxon>Catarrhini</taxon>
        <taxon>Hominidae</taxon>
        <taxon>Homo</taxon>
    </lineage>
</organism>
<name>SNAPN_HUMAN</name>
<gene>
    <name type="primary">SNAPIN</name>
    <name type="synonym">BLOC1S7</name>
    <name type="synonym">SNAP25BP</name>
    <name type="synonym">SNAPAP</name>
</gene>
<sequence>MAGAGSAAVSGAGTPVAGPTGRDLFAEGLLEFLRPAVQQLDSHVHAVRESQVELREQIDNLATELCRINEDQKVALDLDPYVKKLLNARRRVVLVNNILQNAQERLRRLNHSVAKETARRRAMLDSGIYPPGSPGK</sequence>
<proteinExistence type="evidence at protein level"/>